<comment type="miscellaneous">
    <text>Transcription is induced by mei4 transcription factor.</text>
</comment>
<name>MDE6_SCHPO</name>
<protein>
    <recommendedName>
        <fullName>Mei4-dependent protein 6</fullName>
    </recommendedName>
</protein>
<keyword id="KW-0880">Kelch repeat</keyword>
<keyword id="KW-1185">Reference proteome</keyword>
<keyword id="KW-0677">Repeat</keyword>
<proteinExistence type="predicted"/>
<organism>
    <name type="scientific">Schizosaccharomyces pombe (strain 972 / ATCC 24843)</name>
    <name type="common">Fission yeast</name>
    <dbReference type="NCBI Taxonomy" id="284812"/>
    <lineage>
        <taxon>Eukaryota</taxon>
        <taxon>Fungi</taxon>
        <taxon>Dikarya</taxon>
        <taxon>Ascomycota</taxon>
        <taxon>Taphrinomycotina</taxon>
        <taxon>Schizosaccharomycetes</taxon>
        <taxon>Schizosaccharomycetales</taxon>
        <taxon>Schizosaccharomycetaceae</taxon>
        <taxon>Schizosaccharomyces</taxon>
    </lineage>
</organism>
<feature type="chain" id="PRO_0000119148" description="Mei4-dependent protein 6">
    <location>
        <begin position="1"/>
        <end position="700"/>
    </location>
</feature>
<feature type="repeat" description="Kelch 1">
    <location>
        <begin position="276"/>
        <end position="322"/>
    </location>
</feature>
<feature type="repeat" description="Kelch 2">
    <location>
        <begin position="327"/>
        <end position="381"/>
    </location>
</feature>
<feature type="repeat" description="Kelch 3">
    <location>
        <begin position="390"/>
        <end position="439"/>
    </location>
</feature>
<feature type="repeat" description="Kelch 4">
    <location>
        <begin position="452"/>
        <end position="499"/>
    </location>
</feature>
<feature type="repeat" description="Kelch 5">
    <location>
        <begin position="508"/>
        <end position="558"/>
    </location>
</feature>
<feature type="repeat" description="Kelch 6">
    <location>
        <begin position="569"/>
        <end position="619"/>
    </location>
</feature>
<sequence length="700" mass="81659">MERKELSYTIQSWSSYSGAFHPINILIDNPHQANSRWSCNTSICKPNNSEEQYVILKLDKLALVTDITFGKFHTPHLCNLKDFIVYGGREQHLMFPLLRAGLTNDSNRETFPLCIKKYNKIENSIACKYIKIVPLQAHAHEFNMSIWYVALHGIDSASALSCTEKNRALHLEKKALNCLLSYFAFKGKLDICSVILQSYQLSIPHSPLMRMYDAFCRLGDTQKTILLFQQELQAEIIEKWPKHKLTKLRSHRIATFLKGISRRSGHQMVYNPKDNCIYLYGGWDGVKTFSDFWIYNVDKDLWIMENEYGIPGERVCHRMVIDTSQQKLYLLGNYFGSSRETEVPPDARTDFWEFDISKKVWTCLSYDTSKDGGPAAIFDHGMSVDEKRGIVYVSGGCKWDPDELVFEGLYAYDTKNRIWEQLAVRYEDRQKHCEFKIERMGHCMEYFPDENKLYIFGGQSYDQEFILDMCYIKLETREAVQHVRKNDTSQSPSPSFCQRSIMDSKNHRIFTMFGFEQRNIHKVLRPSLWIFYITTEEWVKISDINEEEGNEHPCSRFGHAVAADLNRNIIYLMGGNASTHPLRPMKLSDFWKLDILDRWGIKHCLSNVSLQLHLHRFHELVSENLAKAVEYLQKSMQPQFDKSPLFWNALILDAFSGTHKNKDIAQRRFETFQTIYDLLPVDENTVAPNESLLNMIEFFT</sequence>
<dbReference type="EMBL" id="CU329670">
    <property type="protein sequence ID" value="CAB10107.2"/>
    <property type="molecule type" value="Genomic_DNA"/>
</dbReference>
<dbReference type="PIR" id="T37710">
    <property type="entry name" value="T37710"/>
</dbReference>
<dbReference type="RefSeq" id="NP_594297.2">
    <property type="nucleotide sequence ID" value="NM_001019720.3"/>
</dbReference>
<dbReference type="SMR" id="O13730"/>
<dbReference type="BioGRID" id="279219">
    <property type="interactions" value="12"/>
</dbReference>
<dbReference type="FunCoup" id="O13730">
    <property type="interactions" value="638"/>
</dbReference>
<dbReference type="STRING" id="284812.O13730"/>
<dbReference type="PaxDb" id="4896-SPAC15A10.10.1"/>
<dbReference type="EnsemblFungi" id="SPAC15A10.10.1">
    <property type="protein sequence ID" value="SPAC15A10.10.1:pep"/>
    <property type="gene ID" value="SPAC15A10.10"/>
</dbReference>
<dbReference type="GeneID" id="2542769"/>
<dbReference type="KEGG" id="spo:2542769"/>
<dbReference type="PomBase" id="SPAC15A10.10">
    <property type="gene designation" value="mde6"/>
</dbReference>
<dbReference type="VEuPathDB" id="FungiDB:SPAC15A10.10"/>
<dbReference type="eggNOG" id="KOG2437">
    <property type="taxonomic scope" value="Eukaryota"/>
</dbReference>
<dbReference type="HOGENOM" id="CLU_004210_1_0_1"/>
<dbReference type="InParanoid" id="O13730"/>
<dbReference type="OMA" id="MGHCMEY"/>
<dbReference type="PhylomeDB" id="O13730"/>
<dbReference type="Reactome" id="R-SPO-9861718">
    <property type="pathway name" value="Regulation of pyruvate metabolism"/>
</dbReference>
<dbReference type="PRO" id="PR:O13730"/>
<dbReference type="Proteomes" id="UP000002485">
    <property type="component" value="Chromosome I"/>
</dbReference>
<dbReference type="GO" id="GO:0005737">
    <property type="term" value="C:cytoplasm"/>
    <property type="evidence" value="ECO:0007005"/>
    <property type="project" value="PomBase"/>
</dbReference>
<dbReference type="Gene3D" id="2.60.120.260">
    <property type="entry name" value="Galactose-binding domain-like"/>
    <property type="match status" value="1"/>
</dbReference>
<dbReference type="Gene3D" id="2.120.10.80">
    <property type="entry name" value="Kelch-type beta propeller"/>
    <property type="match status" value="2"/>
</dbReference>
<dbReference type="InterPro" id="IPR052456">
    <property type="entry name" value="CTLH_complex_component"/>
</dbReference>
<dbReference type="InterPro" id="IPR008979">
    <property type="entry name" value="Galactose-bd-like_sf"/>
</dbReference>
<dbReference type="InterPro" id="IPR015915">
    <property type="entry name" value="Kelch-typ_b-propeller"/>
</dbReference>
<dbReference type="InterPro" id="IPR010565">
    <property type="entry name" value="Muskelin_N"/>
</dbReference>
<dbReference type="PANTHER" id="PTHR15526">
    <property type="entry name" value="MUSKELIN"/>
    <property type="match status" value="1"/>
</dbReference>
<dbReference type="PANTHER" id="PTHR15526:SF5">
    <property type="entry name" value="MUSKELIN"/>
    <property type="match status" value="1"/>
</dbReference>
<dbReference type="Pfam" id="PF24681">
    <property type="entry name" value="Kelch_KLHDC2_KLHL20_DRC7"/>
    <property type="match status" value="2"/>
</dbReference>
<dbReference type="Pfam" id="PF06588">
    <property type="entry name" value="Muskelin_N"/>
    <property type="match status" value="1"/>
</dbReference>
<dbReference type="SUPFAM" id="SSF49785">
    <property type="entry name" value="Galactose-binding domain-like"/>
    <property type="match status" value="1"/>
</dbReference>
<dbReference type="SUPFAM" id="SSF117281">
    <property type="entry name" value="Kelch motif"/>
    <property type="match status" value="1"/>
</dbReference>
<accession>O13730</accession>
<gene>
    <name type="primary">mde6</name>
    <name type="ORF">SPAC15A10.10</name>
</gene>
<reference key="1">
    <citation type="journal article" date="2002" name="Nature">
        <title>The genome sequence of Schizosaccharomyces pombe.</title>
        <authorList>
            <person name="Wood V."/>
            <person name="Gwilliam R."/>
            <person name="Rajandream M.A."/>
            <person name="Lyne M.H."/>
            <person name="Lyne R."/>
            <person name="Stewart A."/>
            <person name="Sgouros J.G."/>
            <person name="Peat N."/>
            <person name="Hayles J."/>
            <person name="Baker S.G."/>
            <person name="Basham D."/>
            <person name="Bowman S."/>
            <person name="Brooks K."/>
            <person name="Brown D."/>
            <person name="Brown S."/>
            <person name="Chillingworth T."/>
            <person name="Churcher C.M."/>
            <person name="Collins M."/>
            <person name="Connor R."/>
            <person name="Cronin A."/>
            <person name="Davis P."/>
            <person name="Feltwell T."/>
            <person name="Fraser A."/>
            <person name="Gentles S."/>
            <person name="Goble A."/>
            <person name="Hamlin N."/>
            <person name="Harris D.E."/>
            <person name="Hidalgo J."/>
            <person name="Hodgson G."/>
            <person name="Holroyd S."/>
            <person name="Hornsby T."/>
            <person name="Howarth S."/>
            <person name="Huckle E.J."/>
            <person name="Hunt S."/>
            <person name="Jagels K."/>
            <person name="James K.D."/>
            <person name="Jones L."/>
            <person name="Jones M."/>
            <person name="Leather S."/>
            <person name="McDonald S."/>
            <person name="McLean J."/>
            <person name="Mooney P."/>
            <person name="Moule S."/>
            <person name="Mungall K.L."/>
            <person name="Murphy L.D."/>
            <person name="Niblett D."/>
            <person name="Odell C."/>
            <person name="Oliver K."/>
            <person name="O'Neil S."/>
            <person name="Pearson D."/>
            <person name="Quail M.A."/>
            <person name="Rabbinowitsch E."/>
            <person name="Rutherford K.M."/>
            <person name="Rutter S."/>
            <person name="Saunders D."/>
            <person name="Seeger K."/>
            <person name="Sharp S."/>
            <person name="Skelton J."/>
            <person name="Simmonds M.N."/>
            <person name="Squares R."/>
            <person name="Squares S."/>
            <person name="Stevens K."/>
            <person name="Taylor K."/>
            <person name="Taylor R.G."/>
            <person name="Tivey A."/>
            <person name="Walsh S.V."/>
            <person name="Warren T."/>
            <person name="Whitehead S."/>
            <person name="Woodward J.R."/>
            <person name="Volckaert G."/>
            <person name="Aert R."/>
            <person name="Robben J."/>
            <person name="Grymonprez B."/>
            <person name="Weltjens I."/>
            <person name="Vanstreels E."/>
            <person name="Rieger M."/>
            <person name="Schaefer M."/>
            <person name="Mueller-Auer S."/>
            <person name="Gabel C."/>
            <person name="Fuchs M."/>
            <person name="Duesterhoeft A."/>
            <person name="Fritzc C."/>
            <person name="Holzer E."/>
            <person name="Moestl D."/>
            <person name="Hilbert H."/>
            <person name="Borzym K."/>
            <person name="Langer I."/>
            <person name="Beck A."/>
            <person name="Lehrach H."/>
            <person name="Reinhardt R."/>
            <person name="Pohl T.M."/>
            <person name="Eger P."/>
            <person name="Zimmermann W."/>
            <person name="Wedler H."/>
            <person name="Wambutt R."/>
            <person name="Purnelle B."/>
            <person name="Goffeau A."/>
            <person name="Cadieu E."/>
            <person name="Dreano S."/>
            <person name="Gloux S."/>
            <person name="Lelaure V."/>
            <person name="Mottier S."/>
            <person name="Galibert F."/>
            <person name="Aves S.J."/>
            <person name="Xiang Z."/>
            <person name="Hunt C."/>
            <person name="Moore K."/>
            <person name="Hurst S.M."/>
            <person name="Lucas M."/>
            <person name="Rochet M."/>
            <person name="Gaillardin C."/>
            <person name="Tallada V.A."/>
            <person name="Garzon A."/>
            <person name="Thode G."/>
            <person name="Daga R.R."/>
            <person name="Cruzado L."/>
            <person name="Jimenez J."/>
            <person name="Sanchez M."/>
            <person name="del Rey F."/>
            <person name="Benito J."/>
            <person name="Dominguez A."/>
            <person name="Revuelta J.L."/>
            <person name="Moreno S."/>
            <person name="Armstrong J."/>
            <person name="Forsburg S.L."/>
            <person name="Cerutti L."/>
            <person name="Lowe T."/>
            <person name="McCombie W.R."/>
            <person name="Paulsen I."/>
            <person name="Potashkin J."/>
            <person name="Shpakovski G.V."/>
            <person name="Ussery D."/>
            <person name="Barrell B.G."/>
            <person name="Nurse P."/>
        </authorList>
    </citation>
    <scope>NUCLEOTIDE SEQUENCE [LARGE SCALE GENOMIC DNA]</scope>
    <source>
        <strain>972 / ATCC 24843</strain>
    </source>
</reference>